<sequence length="846" mass="96371">MCFLRRPGAPASWIWWRMLRQVLRRGLQSFCHRLGLCVSRHPVFFLTVPAVLTITFGLSALNRFQPEGDLERLVAPSHSLAKIERSLASSLFPLDQSKSQLYSDLHTPGRYGRVILLSPTGDNILLQAEGILQTHRAVLEMKDGRNSFIGHQLGGVVEVPNSKDQRVKSARAIQITYYLQTYGSATQDLIGEKWENEFCKLIRKLQEEHQELQLYSLASFSLWRDFHKTSILARSKVLVSLVLILTTATLSSSMKDCLRSKPFLGLLGVLTVCISIITAAGIFFITDGKYNSTLLGIPFFAMGHGTKGVFELLSGWRRTKENLPFKDRIADAYSDVMVTYTMTSSLYFITFGMGASPFTNIEAVKVFCQNMCVSILLNYFYIFSFFGSCLVFAGQLEQNRYHSIFCCKIPSAEYLDRKPVWFQTVMSDGHQQTSHHETNPYQHHFIQHFLREHYNEWITNIYVKPFVVILYLIYASFSFMGCLQISDGANIINLLASDSPSVSYAMVQQKYFSNYSPVIGFYVYEPLEYWNSSVQDDLRRLCSGFTAVSWVEQYYQFLKVSNVSANNKSDFISVLQSSFLKKPEFQHFRNDIIFSKAGDESNIIASRLYLVARTSRDKQKEITEVLEKLRPLSLSKSIRFIVFNPSFVFMDHYSLSVTVPVLIAGFGVLLVLILTFFLVIHPLGNFWLILSVTSIELGVLGLMTLWNVDMDCISILCLIYTLNFAIDHCAPLLFTFVLATEHTRTQCIKSSLQDHGTAILQNVTSFLIGLVPLLFVPSNLTFTLFKCLLLTGGCTLLHCFVILPVFLTFFPPSKKHHKKKKRAKRKEREEIECIEIQENPDHVTTV</sequence>
<feature type="chain" id="PRO_0000320640" description="Patched domain-containing protein 4">
    <location>
        <begin position="1"/>
        <end position="846"/>
    </location>
</feature>
<feature type="transmembrane region" description="Helical" evidence="1">
    <location>
        <begin position="41"/>
        <end position="61"/>
    </location>
</feature>
<feature type="transmembrane region" description="Helical" evidence="1">
    <location>
        <begin position="230"/>
        <end position="250"/>
    </location>
</feature>
<feature type="transmembrane region" description="Helical" evidence="1">
    <location>
        <begin position="265"/>
        <end position="285"/>
    </location>
</feature>
<feature type="transmembrane region" description="Helical" evidence="1">
    <location>
        <begin position="293"/>
        <end position="313"/>
    </location>
</feature>
<feature type="transmembrane region" description="Helical" evidence="1">
    <location>
        <begin position="336"/>
        <end position="356"/>
    </location>
</feature>
<feature type="transmembrane region" description="Helical" evidence="1">
    <location>
        <begin position="373"/>
        <end position="393"/>
    </location>
</feature>
<feature type="transmembrane region" description="Helical" evidence="1">
    <location>
        <begin position="465"/>
        <end position="485"/>
    </location>
</feature>
<feature type="transmembrane region" description="Helical" evidence="1">
    <location>
        <begin position="660"/>
        <end position="680"/>
    </location>
</feature>
<feature type="transmembrane region" description="Helical" evidence="1">
    <location>
        <begin position="686"/>
        <end position="706"/>
    </location>
</feature>
<feature type="transmembrane region" description="Helical" evidence="1">
    <location>
        <begin position="718"/>
        <end position="738"/>
    </location>
</feature>
<feature type="transmembrane region" description="Helical" evidence="1">
    <location>
        <begin position="765"/>
        <end position="785"/>
    </location>
</feature>
<feature type="transmembrane region" description="Helical" evidence="1">
    <location>
        <begin position="787"/>
        <end position="807"/>
    </location>
</feature>
<feature type="domain" description="SSD" evidence="2">
    <location>
        <begin position="233"/>
        <end position="392"/>
    </location>
</feature>
<feature type="glycosylation site" description="N-linked (GlcNAc...) asparagine" evidence="1">
    <location>
        <position position="762"/>
    </location>
</feature>
<feature type="splice variant" id="VSP_058427" description="In isoform 4.">
    <location>
        <begin position="1"/>
        <end position="253"/>
    </location>
</feature>
<feature type="splice variant" id="VSP_056623" description="In isoform 2." evidence="4">
    <location>
        <begin position="1"/>
        <end position="17"/>
    </location>
</feature>
<feature type="splice variant" id="VSP_058428" description="In isoform 3.">
    <original>MCFL</original>
    <variation>M</variation>
    <location>
        <begin position="1"/>
        <end position="4"/>
    </location>
</feature>
<feature type="splice variant" id="VSP_056624" description="In isoform 2." evidence="4">
    <original>HGTKGVFE</original>
    <variation>ISTEFTSS</variation>
    <location>
        <begin position="304"/>
        <end position="311"/>
    </location>
</feature>
<feature type="splice variant" id="VSP_056625" description="In isoform 2." evidence="4">
    <location>
        <begin position="312"/>
        <end position="846"/>
    </location>
</feature>
<feature type="sequence conflict" description="In Ref. 2; BAG62081." evidence="5" ref="2">
    <original>F</original>
    <variation>L</variation>
    <location>
        <position position="466"/>
    </location>
</feature>
<protein>
    <recommendedName>
        <fullName>Patched domain-containing protein 4</fullName>
    </recommendedName>
    <alternativeName>
        <fullName>p53-regulated patched protein</fullName>
    </alternativeName>
</protein>
<keyword id="KW-0025">Alternative splicing</keyword>
<keyword id="KW-0325">Glycoprotein</keyword>
<keyword id="KW-0472">Membrane</keyword>
<keyword id="KW-1267">Proteomics identification</keyword>
<keyword id="KW-1185">Reference proteome</keyword>
<keyword id="KW-0812">Transmembrane</keyword>
<keyword id="KW-1133">Transmembrane helix</keyword>
<evidence type="ECO:0000255" key="1"/>
<evidence type="ECO:0000255" key="2">
    <source>
        <dbReference type="PROSITE-ProRule" id="PRU00199"/>
    </source>
</evidence>
<evidence type="ECO:0000269" key="3">
    <source>
    </source>
</evidence>
<evidence type="ECO:0000303" key="4">
    <source>
    </source>
</evidence>
<evidence type="ECO:0000305" key="5"/>
<comment type="function">
    <text evidence="3">Could act as a repressor of canonical hedgehog signaling by antagonizing the effects of SMO, as suggested by down-regulation of hedgehog target genes, including GLI1, PTCH1, and PTCH2 in PTCHD4-expressing cells.</text>
</comment>
<comment type="subcellular location">
    <subcellularLocation>
        <location evidence="5">Membrane</location>
        <topology evidence="5">Multi-pass membrane protein</topology>
    </subcellularLocation>
</comment>
<comment type="alternative products">
    <event type="alternative splicing"/>
    <isoform>
        <id>Q6ZW05-1</id>
        <name>1</name>
        <sequence type="displayed"/>
    </isoform>
    <isoform>
        <id>Q6ZW05-2</id>
        <name>2</name>
        <sequence type="described" ref="VSP_056623 VSP_056624 VSP_056625"/>
    </isoform>
    <isoform>
        <id>Q6ZW05-3</id>
        <name>3</name>
        <sequence type="described" ref="VSP_058428"/>
    </isoform>
    <isoform>
        <id>Q6ZW05-4</id>
        <name>4</name>
        <sequence type="described" ref="VSP_058427"/>
    </isoform>
</comment>
<comment type="induction">
    <text evidence="3">Induced by TP53.</text>
</comment>
<comment type="similarity">
    <text evidence="5">Belongs to the patched family.</text>
</comment>
<comment type="sequence caution" evidence="5">
    <conflict type="erroneous initiation">
        <sequence resource="EMBL-CDS" id="AAI37360"/>
    </conflict>
    <text>Truncated N-terminus.</text>
</comment>
<comment type="sequence caution" evidence="5">
    <conflict type="erroneous initiation">
        <sequence resource="EMBL-CDS" id="AAI37365"/>
    </conflict>
    <text>Truncated N-terminus.</text>
</comment>
<comment type="sequence caution" evidence="5">
    <conflict type="erroneous initiation">
        <sequence resource="EMBL-CDS" id="BAC85703"/>
    </conflict>
    <text>Truncated N-terminus.</text>
</comment>
<comment type="sequence caution" evidence="5">
    <conflict type="frameshift">
        <sequence resource="EMBL-CDS" id="BAC85703"/>
    </conflict>
</comment>
<comment type="sequence caution" evidence="5">
    <conflict type="erroneous gene model prediction">
        <sequence resource="EMBL-CDS" id="EAX04325"/>
    </conflict>
</comment>
<proteinExistence type="evidence at protein level"/>
<dbReference type="EMBL" id="AK123835">
    <property type="protein sequence ID" value="BAC85703.1"/>
    <property type="status" value="ALT_SEQ"/>
    <property type="molecule type" value="mRNA"/>
</dbReference>
<dbReference type="EMBL" id="AK299301">
    <property type="protein sequence ID" value="BAG61315.1"/>
    <property type="molecule type" value="mRNA"/>
</dbReference>
<dbReference type="EMBL" id="AK300335">
    <property type="protein sequence ID" value="BAG62081.1"/>
    <property type="molecule type" value="mRNA"/>
</dbReference>
<dbReference type="EMBL" id="KJ534581">
    <property type="protein sequence ID" value="AIY68042.1"/>
    <property type="molecule type" value="mRNA"/>
</dbReference>
<dbReference type="EMBL" id="AL161622">
    <property type="status" value="NOT_ANNOTATED_CDS"/>
    <property type="molecule type" value="Genomic_DNA"/>
</dbReference>
<dbReference type="EMBL" id="AL139336">
    <property type="status" value="NOT_ANNOTATED_CDS"/>
    <property type="molecule type" value="Genomic_DNA"/>
</dbReference>
<dbReference type="EMBL" id="AL121973">
    <property type="status" value="NOT_ANNOTATED_CDS"/>
    <property type="molecule type" value="Genomic_DNA"/>
</dbReference>
<dbReference type="EMBL" id="AL353138">
    <property type="status" value="NOT_ANNOTATED_CDS"/>
    <property type="molecule type" value="Genomic_DNA"/>
</dbReference>
<dbReference type="EMBL" id="CH471081">
    <property type="protein sequence ID" value="EAX04325.1"/>
    <property type="status" value="ALT_SEQ"/>
    <property type="molecule type" value="Genomic_DNA"/>
</dbReference>
<dbReference type="EMBL" id="BC136779">
    <property type="protein sequence ID" value="AAI36780.1"/>
    <property type="molecule type" value="mRNA"/>
</dbReference>
<dbReference type="EMBL" id="BC137359">
    <property type="protein sequence ID" value="AAI37360.1"/>
    <property type="status" value="ALT_INIT"/>
    <property type="molecule type" value="mRNA"/>
</dbReference>
<dbReference type="EMBL" id="BC137364">
    <property type="protein sequence ID" value="AAI37365.1"/>
    <property type="status" value="ALT_INIT"/>
    <property type="molecule type" value="mRNA"/>
</dbReference>
<dbReference type="CCDS" id="CCDS93929.1">
    <molecule id="Q6ZW05-3"/>
</dbReference>
<dbReference type="RefSeq" id="NP_001013754.3">
    <molecule id="Q6ZW05-1"/>
    <property type="nucleotide sequence ID" value="NM_001013732.4"/>
</dbReference>
<dbReference type="RefSeq" id="NP_001371182.1">
    <molecule id="Q6ZW05-3"/>
    <property type="nucleotide sequence ID" value="NM_001384253.1"/>
</dbReference>
<dbReference type="RefSeq" id="NP_997382.2">
    <property type="nucleotide sequence ID" value="NM_207499.2"/>
</dbReference>
<dbReference type="RefSeq" id="XP_011512941.1">
    <molecule id="Q6ZW05-4"/>
    <property type="nucleotide sequence ID" value="XM_011514639.3"/>
</dbReference>
<dbReference type="RefSeq" id="XP_016866382.1">
    <property type="nucleotide sequence ID" value="XM_017010893.1"/>
</dbReference>
<dbReference type="RefSeq" id="XP_054211492.1">
    <molecule id="Q6ZW05-4"/>
    <property type="nucleotide sequence ID" value="XM_054355517.1"/>
</dbReference>
<dbReference type="SMR" id="Q6ZW05"/>
<dbReference type="STRING" id="9606.ENSP00000341914"/>
<dbReference type="GlyCosmos" id="Q6ZW05">
    <property type="glycosylation" value="1 site, No reported glycans"/>
</dbReference>
<dbReference type="GlyGen" id="Q6ZW05">
    <property type="glycosylation" value="1 site"/>
</dbReference>
<dbReference type="iPTMnet" id="Q6ZW05"/>
<dbReference type="PhosphoSitePlus" id="Q6ZW05"/>
<dbReference type="BioMuta" id="PTCHD4"/>
<dbReference type="DMDM" id="269849699"/>
<dbReference type="PaxDb" id="9606-ENSP00000341914"/>
<dbReference type="PeptideAtlas" id="Q6ZW05"/>
<dbReference type="ProteomicsDB" id="2721"/>
<dbReference type="ProteomicsDB" id="68451">
    <molecule id="Q6ZW05-1"/>
</dbReference>
<dbReference type="Antibodypedia" id="48920">
    <property type="antibodies" value="97 antibodies from 18 providers"/>
</dbReference>
<dbReference type="DNASU" id="442213"/>
<dbReference type="Ensembl" id="ENST00000339488.9">
    <molecule id="Q6ZW05-3"/>
    <property type="protein sequence ID" value="ENSP00000341914.5"/>
    <property type="gene ID" value="ENSG00000244694.8"/>
</dbReference>
<dbReference type="GeneID" id="442213"/>
<dbReference type="KEGG" id="hsa:442213"/>
<dbReference type="MANE-Select" id="ENST00000339488.9">
    <molecule id="Q6ZW05-3"/>
    <property type="protein sequence ID" value="ENSP00000341914.5"/>
    <property type="RefSeq nucleotide sequence ID" value="NM_001384253.1"/>
    <property type="RefSeq protein sequence ID" value="NP_001371182.1"/>
</dbReference>
<dbReference type="UCSC" id="uc011dwm.2">
    <molecule id="Q6ZW05-1"/>
    <property type="organism name" value="human"/>
</dbReference>
<dbReference type="AGR" id="HGNC:21345"/>
<dbReference type="CTD" id="442213"/>
<dbReference type="DisGeNET" id="442213"/>
<dbReference type="GeneCards" id="PTCHD4"/>
<dbReference type="HGNC" id="HGNC:21345">
    <property type="gene designation" value="PTCHD4"/>
</dbReference>
<dbReference type="HPA" id="ENSG00000244694">
    <property type="expression patterns" value="Not detected"/>
</dbReference>
<dbReference type="MIM" id="616908">
    <property type="type" value="gene"/>
</dbReference>
<dbReference type="neXtProt" id="NX_Q6ZW05"/>
<dbReference type="OpenTargets" id="ENSG00000244694"/>
<dbReference type="PharmGKB" id="PA134982541"/>
<dbReference type="VEuPathDB" id="HostDB:ENSG00000244694"/>
<dbReference type="eggNOG" id="KOG1934">
    <property type="taxonomic scope" value="Eukaryota"/>
</dbReference>
<dbReference type="GeneTree" id="ENSGT00940000156827"/>
<dbReference type="HOGENOM" id="CLU_002359_2_1_1"/>
<dbReference type="InParanoid" id="Q6ZW05"/>
<dbReference type="OMA" id="GHQHTSH"/>
<dbReference type="OrthoDB" id="9520942at2759"/>
<dbReference type="PAN-GO" id="Q6ZW05">
    <property type="GO annotations" value="1 GO annotation based on evolutionary models"/>
</dbReference>
<dbReference type="PhylomeDB" id="Q6ZW05"/>
<dbReference type="TreeFam" id="TF331806"/>
<dbReference type="PathwayCommons" id="Q6ZW05"/>
<dbReference type="BioGRID-ORCS" id="442213">
    <property type="hits" value="21 hits in 1152 CRISPR screens"/>
</dbReference>
<dbReference type="ChiTaRS" id="PTCHD4">
    <property type="organism name" value="human"/>
</dbReference>
<dbReference type="GenomeRNAi" id="442213"/>
<dbReference type="Pharos" id="Q6ZW05">
    <property type="development level" value="Tbio"/>
</dbReference>
<dbReference type="PRO" id="PR:Q6ZW05"/>
<dbReference type="Proteomes" id="UP000005640">
    <property type="component" value="Chromosome 6"/>
</dbReference>
<dbReference type="RNAct" id="Q6ZW05">
    <property type="molecule type" value="protein"/>
</dbReference>
<dbReference type="Bgee" id="ENSG00000244694">
    <property type="expression patterns" value="Expressed in stromal cell of endometrium and 86 other cell types or tissues"/>
</dbReference>
<dbReference type="ExpressionAtlas" id="Q6ZW05">
    <property type="expression patterns" value="baseline and differential"/>
</dbReference>
<dbReference type="GO" id="GO:0016020">
    <property type="term" value="C:membrane"/>
    <property type="evidence" value="ECO:0000318"/>
    <property type="project" value="GO_Central"/>
</dbReference>
<dbReference type="Gene3D" id="1.20.1640.10">
    <property type="entry name" value="Multidrug efflux transporter AcrB transmembrane domain"/>
    <property type="match status" value="2"/>
</dbReference>
<dbReference type="InterPro" id="IPR051697">
    <property type="entry name" value="Patched_domain-protein"/>
</dbReference>
<dbReference type="InterPro" id="IPR003392">
    <property type="entry name" value="PTHD_SSD"/>
</dbReference>
<dbReference type="InterPro" id="IPR000731">
    <property type="entry name" value="SSD"/>
</dbReference>
<dbReference type="PANTHER" id="PTHR10796:SF15">
    <property type="entry name" value="PATCHED DOMAIN-CONTAINING PROTEIN 4"/>
    <property type="match status" value="1"/>
</dbReference>
<dbReference type="PANTHER" id="PTHR10796">
    <property type="entry name" value="PATCHED-RELATED"/>
    <property type="match status" value="1"/>
</dbReference>
<dbReference type="Pfam" id="PF02460">
    <property type="entry name" value="Patched"/>
    <property type="match status" value="1"/>
</dbReference>
<dbReference type="SUPFAM" id="SSF82866">
    <property type="entry name" value="Multidrug efflux transporter AcrB transmembrane domain"/>
    <property type="match status" value="2"/>
</dbReference>
<dbReference type="PROSITE" id="PS50156">
    <property type="entry name" value="SSD"/>
    <property type="match status" value="1"/>
</dbReference>
<gene>
    <name type="primary">PTCHD4</name>
    <name type="synonym">C6orf138</name>
    <name type="synonym">PTCH53</name>
</gene>
<name>PTHD4_HUMAN</name>
<reference key="1">
    <citation type="journal article" date="2014" name="J. Biol. Chem.">
        <title>A PTCH1 homolog transcriptionally activated by p53 suppresses hedgehog signaling.</title>
        <authorList>
            <person name="Chung J.H."/>
            <person name="Larsen A.R."/>
            <person name="Chen E."/>
            <person name="Bunz F."/>
        </authorList>
    </citation>
    <scope>NUCLEOTIDE SEQUENCE [MRNA] (ISOFORM 3)</scope>
    <scope>FUNCTION</scope>
    <scope>INDUCTION BY TP53</scope>
</reference>
<reference key="2">
    <citation type="journal article" date="2004" name="Nat. Genet.">
        <title>Complete sequencing and characterization of 21,243 full-length human cDNAs.</title>
        <authorList>
            <person name="Ota T."/>
            <person name="Suzuki Y."/>
            <person name="Nishikawa T."/>
            <person name="Otsuki T."/>
            <person name="Sugiyama T."/>
            <person name="Irie R."/>
            <person name="Wakamatsu A."/>
            <person name="Hayashi K."/>
            <person name="Sato H."/>
            <person name="Nagai K."/>
            <person name="Kimura K."/>
            <person name="Makita H."/>
            <person name="Sekine M."/>
            <person name="Obayashi M."/>
            <person name="Nishi T."/>
            <person name="Shibahara T."/>
            <person name="Tanaka T."/>
            <person name="Ishii S."/>
            <person name="Yamamoto J."/>
            <person name="Saito K."/>
            <person name="Kawai Y."/>
            <person name="Isono Y."/>
            <person name="Nakamura Y."/>
            <person name="Nagahari K."/>
            <person name="Murakami K."/>
            <person name="Yasuda T."/>
            <person name="Iwayanagi T."/>
            <person name="Wagatsuma M."/>
            <person name="Shiratori A."/>
            <person name="Sudo H."/>
            <person name="Hosoiri T."/>
            <person name="Kaku Y."/>
            <person name="Kodaira H."/>
            <person name="Kondo H."/>
            <person name="Sugawara M."/>
            <person name="Takahashi M."/>
            <person name="Kanda K."/>
            <person name="Yokoi T."/>
            <person name="Furuya T."/>
            <person name="Kikkawa E."/>
            <person name="Omura Y."/>
            <person name="Abe K."/>
            <person name="Kamihara K."/>
            <person name="Katsuta N."/>
            <person name="Sato K."/>
            <person name="Tanikawa M."/>
            <person name="Yamazaki M."/>
            <person name="Ninomiya K."/>
            <person name="Ishibashi T."/>
            <person name="Yamashita H."/>
            <person name="Murakawa K."/>
            <person name="Fujimori K."/>
            <person name="Tanai H."/>
            <person name="Kimata M."/>
            <person name="Watanabe M."/>
            <person name="Hiraoka S."/>
            <person name="Chiba Y."/>
            <person name="Ishida S."/>
            <person name="Ono Y."/>
            <person name="Takiguchi S."/>
            <person name="Watanabe S."/>
            <person name="Yosida M."/>
            <person name="Hotuta T."/>
            <person name="Kusano J."/>
            <person name="Kanehori K."/>
            <person name="Takahashi-Fujii A."/>
            <person name="Hara H."/>
            <person name="Tanase T.-O."/>
            <person name="Nomura Y."/>
            <person name="Togiya S."/>
            <person name="Komai F."/>
            <person name="Hara R."/>
            <person name="Takeuchi K."/>
            <person name="Arita M."/>
            <person name="Imose N."/>
            <person name="Musashino K."/>
            <person name="Yuuki H."/>
            <person name="Oshima A."/>
            <person name="Sasaki N."/>
            <person name="Aotsuka S."/>
            <person name="Yoshikawa Y."/>
            <person name="Matsunawa H."/>
            <person name="Ichihara T."/>
            <person name="Shiohata N."/>
            <person name="Sano S."/>
            <person name="Moriya S."/>
            <person name="Momiyama H."/>
            <person name="Satoh N."/>
            <person name="Takami S."/>
            <person name="Terashima Y."/>
            <person name="Suzuki O."/>
            <person name="Nakagawa S."/>
            <person name="Senoh A."/>
            <person name="Mizoguchi H."/>
            <person name="Goto Y."/>
            <person name="Shimizu F."/>
            <person name="Wakebe H."/>
            <person name="Hishigaki H."/>
            <person name="Watanabe T."/>
            <person name="Sugiyama A."/>
            <person name="Takemoto M."/>
            <person name="Kawakami B."/>
            <person name="Yamazaki M."/>
            <person name="Watanabe K."/>
            <person name="Kumagai A."/>
            <person name="Itakura S."/>
            <person name="Fukuzumi Y."/>
            <person name="Fujimori Y."/>
            <person name="Komiyama M."/>
            <person name="Tashiro H."/>
            <person name="Tanigami A."/>
            <person name="Fujiwara T."/>
            <person name="Ono T."/>
            <person name="Yamada K."/>
            <person name="Fujii Y."/>
            <person name="Ozaki K."/>
            <person name="Hirao M."/>
            <person name="Ohmori Y."/>
            <person name="Kawabata A."/>
            <person name="Hikiji T."/>
            <person name="Kobatake N."/>
            <person name="Inagaki H."/>
            <person name="Ikema Y."/>
            <person name="Okamoto S."/>
            <person name="Okitani R."/>
            <person name="Kawakami T."/>
            <person name="Noguchi S."/>
            <person name="Itoh T."/>
            <person name="Shigeta K."/>
            <person name="Senba T."/>
            <person name="Matsumura K."/>
            <person name="Nakajima Y."/>
            <person name="Mizuno T."/>
            <person name="Morinaga M."/>
            <person name="Sasaki M."/>
            <person name="Togashi T."/>
            <person name="Oyama M."/>
            <person name="Hata H."/>
            <person name="Watanabe M."/>
            <person name="Komatsu T."/>
            <person name="Mizushima-Sugano J."/>
            <person name="Satoh T."/>
            <person name="Shirai Y."/>
            <person name="Takahashi Y."/>
            <person name="Nakagawa K."/>
            <person name="Okumura K."/>
            <person name="Nagase T."/>
            <person name="Nomura N."/>
            <person name="Kikuchi H."/>
            <person name="Masuho Y."/>
            <person name="Yamashita R."/>
            <person name="Nakai K."/>
            <person name="Yada T."/>
            <person name="Nakamura Y."/>
            <person name="Ohara O."/>
            <person name="Isogai T."/>
            <person name="Sugano S."/>
        </authorList>
    </citation>
    <scope>NUCLEOTIDE SEQUENCE [LARGE SCALE MRNA] (ISOFORMS 1 AND 4)</scope>
</reference>
<reference key="3">
    <citation type="journal article" date="2003" name="Nature">
        <title>The DNA sequence and analysis of human chromosome 6.</title>
        <authorList>
            <person name="Mungall A.J."/>
            <person name="Palmer S.A."/>
            <person name="Sims S.K."/>
            <person name="Edwards C.A."/>
            <person name="Ashurst J.L."/>
            <person name="Wilming L."/>
            <person name="Jones M.C."/>
            <person name="Horton R."/>
            <person name="Hunt S.E."/>
            <person name="Scott C.E."/>
            <person name="Gilbert J.G.R."/>
            <person name="Clamp M.E."/>
            <person name="Bethel G."/>
            <person name="Milne S."/>
            <person name="Ainscough R."/>
            <person name="Almeida J.P."/>
            <person name="Ambrose K.D."/>
            <person name="Andrews T.D."/>
            <person name="Ashwell R.I.S."/>
            <person name="Babbage A.K."/>
            <person name="Bagguley C.L."/>
            <person name="Bailey J."/>
            <person name="Banerjee R."/>
            <person name="Barker D.J."/>
            <person name="Barlow K.F."/>
            <person name="Bates K."/>
            <person name="Beare D.M."/>
            <person name="Beasley H."/>
            <person name="Beasley O."/>
            <person name="Bird C.P."/>
            <person name="Blakey S.E."/>
            <person name="Bray-Allen S."/>
            <person name="Brook J."/>
            <person name="Brown A.J."/>
            <person name="Brown J.Y."/>
            <person name="Burford D.C."/>
            <person name="Burrill W."/>
            <person name="Burton J."/>
            <person name="Carder C."/>
            <person name="Carter N.P."/>
            <person name="Chapman J.C."/>
            <person name="Clark S.Y."/>
            <person name="Clark G."/>
            <person name="Clee C.M."/>
            <person name="Clegg S."/>
            <person name="Cobley V."/>
            <person name="Collier R.E."/>
            <person name="Collins J.E."/>
            <person name="Colman L.K."/>
            <person name="Corby N.R."/>
            <person name="Coville G.J."/>
            <person name="Culley K.M."/>
            <person name="Dhami P."/>
            <person name="Davies J."/>
            <person name="Dunn M."/>
            <person name="Earthrowl M.E."/>
            <person name="Ellington A.E."/>
            <person name="Evans K.A."/>
            <person name="Faulkner L."/>
            <person name="Francis M.D."/>
            <person name="Frankish A."/>
            <person name="Frankland J."/>
            <person name="French L."/>
            <person name="Garner P."/>
            <person name="Garnett J."/>
            <person name="Ghori M.J."/>
            <person name="Gilby L.M."/>
            <person name="Gillson C.J."/>
            <person name="Glithero R.J."/>
            <person name="Grafham D.V."/>
            <person name="Grant M."/>
            <person name="Gribble S."/>
            <person name="Griffiths C."/>
            <person name="Griffiths M.N.D."/>
            <person name="Hall R."/>
            <person name="Halls K.S."/>
            <person name="Hammond S."/>
            <person name="Harley J.L."/>
            <person name="Hart E.A."/>
            <person name="Heath P.D."/>
            <person name="Heathcott R."/>
            <person name="Holmes S.J."/>
            <person name="Howden P.J."/>
            <person name="Howe K.L."/>
            <person name="Howell G.R."/>
            <person name="Huckle E."/>
            <person name="Humphray S.J."/>
            <person name="Humphries M.D."/>
            <person name="Hunt A.R."/>
            <person name="Johnson C.M."/>
            <person name="Joy A.A."/>
            <person name="Kay M."/>
            <person name="Keenan S.J."/>
            <person name="Kimberley A.M."/>
            <person name="King A."/>
            <person name="Laird G.K."/>
            <person name="Langford C."/>
            <person name="Lawlor S."/>
            <person name="Leongamornlert D.A."/>
            <person name="Leversha M."/>
            <person name="Lloyd C.R."/>
            <person name="Lloyd D.M."/>
            <person name="Loveland J.E."/>
            <person name="Lovell J."/>
            <person name="Martin S."/>
            <person name="Mashreghi-Mohammadi M."/>
            <person name="Maslen G.L."/>
            <person name="Matthews L."/>
            <person name="McCann O.T."/>
            <person name="McLaren S.J."/>
            <person name="McLay K."/>
            <person name="McMurray A."/>
            <person name="Moore M.J.F."/>
            <person name="Mullikin J.C."/>
            <person name="Niblett D."/>
            <person name="Nickerson T."/>
            <person name="Novik K.L."/>
            <person name="Oliver K."/>
            <person name="Overton-Larty E.K."/>
            <person name="Parker A."/>
            <person name="Patel R."/>
            <person name="Pearce A.V."/>
            <person name="Peck A.I."/>
            <person name="Phillimore B.J.C.T."/>
            <person name="Phillips S."/>
            <person name="Plumb R.W."/>
            <person name="Porter K.M."/>
            <person name="Ramsey Y."/>
            <person name="Ranby S.A."/>
            <person name="Rice C.M."/>
            <person name="Ross M.T."/>
            <person name="Searle S.M."/>
            <person name="Sehra H.K."/>
            <person name="Sheridan E."/>
            <person name="Skuce C.D."/>
            <person name="Smith S."/>
            <person name="Smith M."/>
            <person name="Spraggon L."/>
            <person name="Squares S.L."/>
            <person name="Steward C.A."/>
            <person name="Sycamore N."/>
            <person name="Tamlyn-Hall G."/>
            <person name="Tester J."/>
            <person name="Theaker A.J."/>
            <person name="Thomas D.W."/>
            <person name="Thorpe A."/>
            <person name="Tracey A."/>
            <person name="Tromans A."/>
            <person name="Tubby B."/>
            <person name="Wall M."/>
            <person name="Wallis J.M."/>
            <person name="West A.P."/>
            <person name="White S.S."/>
            <person name="Whitehead S.L."/>
            <person name="Whittaker H."/>
            <person name="Wild A."/>
            <person name="Willey D.J."/>
            <person name="Wilmer T.E."/>
            <person name="Wood J.M."/>
            <person name="Wray P.W."/>
            <person name="Wyatt J.C."/>
            <person name="Young L."/>
            <person name="Younger R.M."/>
            <person name="Bentley D.R."/>
            <person name="Coulson A."/>
            <person name="Durbin R.M."/>
            <person name="Hubbard T."/>
            <person name="Sulston J.E."/>
            <person name="Dunham I."/>
            <person name="Rogers J."/>
            <person name="Beck S."/>
        </authorList>
    </citation>
    <scope>NUCLEOTIDE SEQUENCE [LARGE SCALE GENOMIC DNA]</scope>
</reference>
<reference key="4">
    <citation type="submission" date="2005-07" db="EMBL/GenBank/DDBJ databases">
        <authorList>
            <person name="Mural R.J."/>
            <person name="Istrail S."/>
            <person name="Sutton G.G."/>
            <person name="Florea L."/>
            <person name="Halpern A.L."/>
            <person name="Mobarry C.M."/>
            <person name="Lippert R."/>
            <person name="Walenz B."/>
            <person name="Shatkay H."/>
            <person name="Dew I."/>
            <person name="Miller J.R."/>
            <person name="Flanigan M.J."/>
            <person name="Edwards N.J."/>
            <person name="Bolanos R."/>
            <person name="Fasulo D."/>
            <person name="Halldorsson B.V."/>
            <person name="Hannenhalli S."/>
            <person name="Turner R."/>
            <person name="Yooseph S."/>
            <person name="Lu F."/>
            <person name="Nusskern D.R."/>
            <person name="Shue B.C."/>
            <person name="Zheng X.H."/>
            <person name="Zhong F."/>
            <person name="Delcher A.L."/>
            <person name="Huson D.H."/>
            <person name="Kravitz S.A."/>
            <person name="Mouchard L."/>
            <person name="Reinert K."/>
            <person name="Remington K.A."/>
            <person name="Clark A.G."/>
            <person name="Waterman M.S."/>
            <person name="Eichler E.E."/>
            <person name="Adams M.D."/>
            <person name="Hunkapiller M.W."/>
            <person name="Myers E.W."/>
            <person name="Venter J.C."/>
        </authorList>
    </citation>
    <scope>NUCLEOTIDE SEQUENCE [LARGE SCALE GENOMIC DNA]</scope>
</reference>
<reference key="5">
    <citation type="journal article" date="2004" name="Genome Res.">
        <title>The status, quality, and expansion of the NIH full-length cDNA project: the Mammalian Gene Collection (MGC).</title>
        <authorList>
            <consortium name="The MGC Project Team"/>
        </authorList>
    </citation>
    <scope>NUCLEOTIDE SEQUENCE [LARGE SCALE MRNA] (ISOFORM 2)</scope>
    <source>
        <tissue>Brain</tissue>
    </source>
</reference>
<accession>Q6ZW05</accession>
<accession>A0A0A7EN49</accession>
<accession>B0QZ29</accession>
<accession>B2RPC0</accession>
<accession>B4DRK3</accession>
<accession>B4DTR9</accession>
<accession>Q5T884</accession>
<organism>
    <name type="scientific">Homo sapiens</name>
    <name type="common">Human</name>
    <dbReference type="NCBI Taxonomy" id="9606"/>
    <lineage>
        <taxon>Eukaryota</taxon>
        <taxon>Metazoa</taxon>
        <taxon>Chordata</taxon>
        <taxon>Craniata</taxon>
        <taxon>Vertebrata</taxon>
        <taxon>Euteleostomi</taxon>
        <taxon>Mammalia</taxon>
        <taxon>Eutheria</taxon>
        <taxon>Euarchontoglires</taxon>
        <taxon>Primates</taxon>
        <taxon>Haplorrhini</taxon>
        <taxon>Catarrhini</taxon>
        <taxon>Hominidae</taxon>
        <taxon>Homo</taxon>
    </lineage>
</organism>